<comment type="function">
    <text evidence="1">Involved in the catabolism of oxalate and in the adapatation to low pH via the induction of the oxalate-dependent acid tolerance response (ATR). Catalyzes the transfer of the CoA moiety from formyl-CoA to oxalate (By similarity).</text>
</comment>
<comment type="catalytic activity">
    <reaction evidence="2">
        <text>formyl-CoA + oxalate = oxalyl-CoA + formate</text>
        <dbReference type="Rhea" id="RHEA:16545"/>
        <dbReference type="ChEBI" id="CHEBI:15740"/>
        <dbReference type="ChEBI" id="CHEBI:30623"/>
        <dbReference type="ChEBI" id="CHEBI:57376"/>
        <dbReference type="ChEBI" id="CHEBI:57388"/>
        <dbReference type="EC" id="2.8.3.16"/>
    </reaction>
</comment>
<comment type="pathway">
    <text evidence="2">Metabolic intermediate degradation; oxalate degradation; CO(2) and formate from oxalate: step 1/2.</text>
</comment>
<comment type="subunit">
    <text evidence="2">Homodimer.</text>
</comment>
<comment type="similarity">
    <text evidence="2">Belongs to the CoA-transferase III family. Frc subfamily.</text>
</comment>
<organism>
    <name type="scientific">Escherichia coli O6:H1 (strain CFT073 / ATCC 700928 / UPEC)</name>
    <dbReference type="NCBI Taxonomy" id="199310"/>
    <lineage>
        <taxon>Bacteria</taxon>
        <taxon>Pseudomonadati</taxon>
        <taxon>Pseudomonadota</taxon>
        <taxon>Gammaproteobacteria</taxon>
        <taxon>Enterobacterales</taxon>
        <taxon>Enterobacteriaceae</taxon>
        <taxon>Escherichia</taxon>
    </lineage>
</organism>
<keyword id="KW-1185">Reference proteome</keyword>
<keyword id="KW-0808">Transferase</keyword>
<name>FCTA_ECOL6</name>
<proteinExistence type="inferred from homology"/>
<protein>
    <recommendedName>
        <fullName>Formyl-CoA:oxalate CoA-transferase</fullName>
        <shortName>FCOCT</shortName>
        <ecNumber evidence="2">2.8.3.16</ecNumber>
    </recommendedName>
    <alternativeName>
        <fullName evidence="2">Formyl-coenzyme A transferase</fullName>
        <shortName evidence="2">Formyl-CoA transferase</shortName>
    </alternativeName>
</protein>
<gene>
    <name evidence="2" type="primary">frc</name>
    <name type="ordered locus">c2910</name>
</gene>
<accession>Q8FFE8</accession>
<evidence type="ECO:0000250" key="1"/>
<evidence type="ECO:0000255" key="2">
    <source>
        <dbReference type="HAMAP-Rule" id="MF_00742"/>
    </source>
</evidence>
<feature type="chain" id="PRO_0000194717" description="Formyl-CoA:oxalate CoA-transferase">
    <location>
        <begin position="1"/>
        <end position="416"/>
    </location>
</feature>
<feature type="active site" description="Nucleophile" evidence="2">
    <location>
        <position position="169"/>
    </location>
</feature>
<feature type="binding site" evidence="1">
    <location>
        <begin position="17"/>
        <end position="18"/>
    </location>
    <ligand>
        <name>CoA</name>
        <dbReference type="ChEBI" id="CHEBI:57287"/>
    </ligand>
</feature>
<feature type="binding site" evidence="2">
    <location>
        <position position="38"/>
    </location>
    <ligand>
        <name>CoA</name>
        <dbReference type="ChEBI" id="CHEBI:57287"/>
    </ligand>
</feature>
<feature type="binding site" evidence="1">
    <location>
        <begin position="72"/>
        <end position="75"/>
    </location>
    <ligand>
        <name>CoA</name>
        <dbReference type="ChEBI" id="CHEBI:57287"/>
    </ligand>
</feature>
<feature type="binding site" evidence="1">
    <location>
        <begin position="96"/>
        <end position="98"/>
    </location>
    <ligand>
        <name>CoA</name>
        <dbReference type="ChEBI" id="CHEBI:57287"/>
    </ligand>
</feature>
<feature type="binding site" evidence="2">
    <location>
        <position position="104"/>
    </location>
    <ligand>
        <name>CoA</name>
        <dbReference type="ChEBI" id="CHEBI:57287"/>
    </ligand>
</feature>
<feature type="binding site" evidence="1">
    <location>
        <begin position="137"/>
        <end position="140"/>
    </location>
    <ligand>
        <name>CoA</name>
        <dbReference type="ChEBI" id="CHEBI:57287"/>
    </ligand>
</feature>
<feature type="binding site" evidence="1">
    <location>
        <begin position="248"/>
        <end position="250"/>
    </location>
    <ligand>
        <name>substrate</name>
    </ligand>
</feature>
<feature type="binding site" evidence="1">
    <location>
        <begin position="273"/>
        <end position="275"/>
    </location>
    <ligand>
        <name>CoA</name>
        <dbReference type="ChEBI" id="CHEBI:57287"/>
    </ligand>
</feature>
<reference key="1">
    <citation type="journal article" date="2002" name="Proc. Natl. Acad. Sci. U.S.A.">
        <title>Extensive mosaic structure revealed by the complete genome sequence of uropathogenic Escherichia coli.</title>
        <authorList>
            <person name="Welch R.A."/>
            <person name="Burland V."/>
            <person name="Plunkett G. III"/>
            <person name="Redford P."/>
            <person name="Roesch P."/>
            <person name="Rasko D."/>
            <person name="Buckles E.L."/>
            <person name="Liou S.-R."/>
            <person name="Boutin A."/>
            <person name="Hackett J."/>
            <person name="Stroud D."/>
            <person name="Mayhew G.F."/>
            <person name="Rose D.J."/>
            <person name="Zhou S."/>
            <person name="Schwartz D.C."/>
            <person name="Perna N.T."/>
            <person name="Mobley H.L.T."/>
            <person name="Donnenberg M.S."/>
            <person name="Blattner F.R."/>
        </authorList>
    </citation>
    <scope>NUCLEOTIDE SEQUENCE [LARGE SCALE GENOMIC DNA]</scope>
    <source>
        <strain>CFT073 / ATCC 700928 / UPEC</strain>
    </source>
</reference>
<dbReference type="EC" id="2.8.3.16" evidence="2"/>
<dbReference type="EMBL" id="AE014075">
    <property type="protein sequence ID" value="AAN81360.1"/>
    <property type="molecule type" value="Genomic_DNA"/>
</dbReference>
<dbReference type="RefSeq" id="WP_000106774.1">
    <property type="nucleotide sequence ID" value="NZ_CP051263.1"/>
</dbReference>
<dbReference type="SMR" id="Q8FFE8"/>
<dbReference type="STRING" id="199310.c2910"/>
<dbReference type="KEGG" id="ecc:c2910"/>
<dbReference type="eggNOG" id="COG1804">
    <property type="taxonomic scope" value="Bacteria"/>
</dbReference>
<dbReference type="HOGENOM" id="CLU_033975_2_1_6"/>
<dbReference type="BioCyc" id="ECOL199310:C2910-MONOMER"/>
<dbReference type="UniPathway" id="UPA00540">
    <property type="reaction ID" value="UER00598"/>
</dbReference>
<dbReference type="Proteomes" id="UP000001410">
    <property type="component" value="Chromosome"/>
</dbReference>
<dbReference type="GO" id="GO:0033608">
    <property type="term" value="F:formyl-CoA transferase activity"/>
    <property type="evidence" value="ECO:0007669"/>
    <property type="project" value="UniProtKB-EC"/>
</dbReference>
<dbReference type="GO" id="GO:0033611">
    <property type="term" value="P:oxalate catabolic process"/>
    <property type="evidence" value="ECO:0007669"/>
    <property type="project" value="UniProtKB-UniRule"/>
</dbReference>
<dbReference type="Gene3D" id="3.40.50.10540">
    <property type="entry name" value="Crotonobetainyl-coa:carnitine coa-transferase, domain 1"/>
    <property type="match status" value="1"/>
</dbReference>
<dbReference type="Gene3D" id="3.30.1540.10">
    <property type="entry name" value="formyl-coa transferase, domain 3"/>
    <property type="match status" value="1"/>
</dbReference>
<dbReference type="HAMAP" id="MF_00742">
    <property type="entry name" value="Formyl_CoA_transfer"/>
    <property type="match status" value="1"/>
</dbReference>
<dbReference type="InterPro" id="IPR050483">
    <property type="entry name" value="CoA-transferase_III_domain"/>
</dbReference>
<dbReference type="InterPro" id="IPR003673">
    <property type="entry name" value="CoA-Trfase_fam_III"/>
</dbReference>
<dbReference type="InterPro" id="IPR044855">
    <property type="entry name" value="CoA-Trfase_III_dom3_sf"/>
</dbReference>
<dbReference type="InterPro" id="IPR023606">
    <property type="entry name" value="CoA-Trfase_III_dom_1_sf"/>
</dbReference>
<dbReference type="InterPro" id="IPR017659">
    <property type="entry name" value="Formyl_CoA_transfer"/>
</dbReference>
<dbReference type="NCBIfam" id="TIGR03253">
    <property type="entry name" value="oxalate_frc"/>
    <property type="match status" value="1"/>
</dbReference>
<dbReference type="NCBIfam" id="NF003809">
    <property type="entry name" value="PRK05398.1"/>
    <property type="match status" value="1"/>
</dbReference>
<dbReference type="PANTHER" id="PTHR48207">
    <property type="entry name" value="SUCCINATE--HYDROXYMETHYLGLUTARATE COA-TRANSFERASE"/>
    <property type="match status" value="1"/>
</dbReference>
<dbReference type="PANTHER" id="PTHR48207:SF3">
    <property type="entry name" value="SUCCINATE--HYDROXYMETHYLGLUTARATE COA-TRANSFERASE"/>
    <property type="match status" value="1"/>
</dbReference>
<dbReference type="Pfam" id="PF02515">
    <property type="entry name" value="CoA_transf_3"/>
    <property type="match status" value="1"/>
</dbReference>
<dbReference type="SUPFAM" id="SSF89796">
    <property type="entry name" value="CoA-transferase family III (CaiB/BaiF)"/>
    <property type="match status" value="1"/>
</dbReference>
<sequence length="416" mass="45858">MSTPLQGIKVLDFTGVQSGPSCTQMLAWFGADVIKIERPSVGDVTRHQLRDIPDIDALYFTMLNSNKRSIELNTKTAEGKEVMEKLIREADILVENFHPGAIDHMGFTWEHIQEINPRLIFGSIKGFDECSPYVNVKAYENVAQAAGGAASTTGFWDGPPLVSAAALGDSNTGMHLLIGLLAALLHREKTGRGQRVTMSMQDAVLNLCRVKLRDQQRLDKLGYLEEYPQYPNGTFGDAVPRGGNAGGGGQPGWILKCKGWETDPNAYIYFTIQEQNWENTCKAIGKPEWITDPAYSTAHARQPHIFDIFAEIEKYTVTIDKHEAVAYLTQFDIPCAPVLSMKEISLDPSLRQSGSVVEVEQPLRGKYLTVGCPMKFSAFTPDIKAAPLLGEHTAAVLQELGYSDDEIAAMKQNHAI</sequence>